<proteinExistence type="inferred from homology"/>
<dbReference type="EC" id="3.4.21.88" evidence="1"/>
<dbReference type="EMBL" id="CP000563">
    <property type="protein sequence ID" value="ABN59690.1"/>
    <property type="molecule type" value="Genomic_DNA"/>
</dbReference>
<dbReference type="RefSeq" id="WP_006084613.1">
    <property type="nucleotide sequence ID" value="NC_009052.1"/>
</dbReference>
<dbReference type="SMR" id="A3CYX7"/>
<dbReference type="STRING" id="325240.Sbal_0156"/>
<dbReference type="MEROPS" id="S24.001"/>
<dbReference type="GeneID" id="11774286"/>
<dbReference type="KEGG" id="sbl:Sbal_0156"/>
<dbReference type="HOGENOM" id="CLU_066192_45_3_6"/>
<dbReference type="OrthoDB" id="9802364at2"/>
<dbReference type="Proteomes" id="UP000001557">
    <property type="component" value="Chromosome"/>
</dbReference>
<dbReference type="GO" id="GO:0003677">
    <property type="term" value="F:DNA binding"/>
    <property type="evidence" value="ECO:0007669"/>
    <property type="project" value="UniProtKB-UniRule"/>
</dbReference>
<dbReference type="GO" id="GO:0004252">
    <property type="term" value="F:serine-type endopeptidase activity"/>
    <property type="evidence" value="ECO:0007669"/>
    <property type="project" value="UniProtKB-UniRule"/>
</dbReference>
<dbReference type="GO" id="GO:0006281">
    <property type="term" value="P:DNA repair"/>
    <property type="evidence" value="ECO:0007669"/>
    <property type="project" value="UniProtKB-UniRule"/>
</dbReference>
<dbReference type="GO" id="GO:0006260">
    <property type="term" value="P:DNA replication"/>
    <property type="evidence" value="ECO:0007669"/>
    <property type="project" value="UniProtKB-UniRule"/>
</dbReference>
<dbReference type="GO" id="GO:0045892">
    <property type="term" value="P:negative regulation of DNA-templated transcription"/>
    <property type="evidence" value="ECO:0007669"/>
    <property type="project" value="UniProtKB-UniRule"/>
</dbReference>
<dbReference type="GO" id="GO:0006508">
    <property type="term" value="P:proteolysis"/>
    <property type="evidence" value="ECO:0007669"/>
    <property type="project" value="InterPro"/>
</dbReference>
<dbReference type="GO" id="GO:0009432">
    <property type="term" value="P:SOS response"/>
    <property type="evidence" value="ECO:0007669"/>
    <property type="project" value="UniProtKB-UniRule"/>
</dbReference>
<dbReference type="CDD" id="cd06529">
    <property type="entry name" value="S24_LexA-like"/>
    <property type="match status" value="1"/>
</dbReference>
<dbReference type="FunFam" id="1.10.10.10:FF:000009">
    <property type="entry name" value="LexA repressor"/>
    <property type="match status" value="1"/>
</dbReference>
<dbReference type="FunFam" id="2.10.109.10:FF:000001">
    <property type="entry name" value="LexA repressor"/>
    <property type="match status" value="1"/>
</dbReference>
<dbReference type="Gene3D" id="2.10.109.10">
    <property type="entry name" value="Umud Fragment, subunit A"/>
    <property type="match status" value="1"/>
</dbReference>
<dbReference type="Gene3D" id="1.10.10.10">
    <property type="entry name" value="Winged helix-like DNA-binding domain superfamily/Winged helix DNA-binding domain"/>
    <property type="match status" value="1"/>
</dbReference>
<dbReference type="HAMAP" id="MF_00015">
    <property type="entry name" value="LexA"/>
    <property type="match status" value="1"/>
</dbReference>
<dbReference type="InterPro" id="IPR006200">
    <property type="entry name" value="LexA"/>
</dbReference>
<dbReference type="InterPro" id="IPR039418">
    <property type="entry name" value="LexA-like"/>
</dbReference>
<dbReference type="InterPro" id="IPR036286">
    <property type="entry name" value="LexA/Signal_pep-like_sf"/>
</dbReference>
<dbReference type="InterPro" id="IPR006199">
    <property type="entry name" value="LexA_DNA-bd_dom"/>
</dbReference>
<dbReference type="InterPro" id="IPR050077">
    <property type="entry name" value="LexA_repressor"/>
</dbReference>
<dbReference type="InterPro" id="IPR006197">
    <property type="entry name" value="Peptidase_S24_LexA"/>
</dbReference>
<dbReference type="InterPro" id="IPR015927">
    <property type="entry name" value="Peptidase_S24_S26A/B/C"/>
</dbReference>
<dbReference type="InterPro" id="IPR036388">
    <property type="entry name" value="WH-like_DNA-bd_sf"/>
</dbReference>
<dbReference type="InterPro" id="IPR036390">
    <property type="entry name" value="WH_DNA-bd_sf"/>
</dbReference>
<dbReference type="NCBIfam" id="TIGR00498">
    <property type="entry name" value="lexA"/>
    <property type="match status" value="1"/>
</dbReference>
<dbReference type="PANTHER" id="PTHR33516">
    <property type="entry name" value="LEXA REPRESSOR"/>
    <property type="match status" value="1"/>
</dbReference>
<dbReference type="PANTHER" id="PTHR33516:SF2">
    <property type="entry name" value="LEXA REPRESSOR-RELATED"/>
    <property type="match status" value="1"/>
</dbReference>
<dbReference type="Pfam" id="PF01726">
    <property type="entry name" value="LexA_DNA_bind"/>
    <property type="match status" value="1"/>
</dbReference>
<dbReference type="Pfam" id="PF00717">
    <property type="entry name" value="Peptidase_S24"/>
    <property type="match status" value="1"/>
</dbReference>
<dbReference type="PRINTS" id="PR00726">
    <property type="entry name" value="LEXASERPTASE"/>
</dbReference>
<dbReference type="SUPFAM" id="SSF51306">
    <property type="entry name" value="LexA/Signal peptidase"/>
    <property type="match status" value="1"/>
</dbReference>
<dbReference type="SUPFAM" id="SSF46785">
    <property type="entry name" value="Winged helix' DNA-binding domain"/>
    <property type="match status" value="1"/>
</dbReference>
<organism>
    <name type="scientific">Shewanella baltica (strain OS155 / ATCC BAA-1091)</name>
    <dbReference type="NCBI Taxonomy" id="325240"/>
    <lineage>
        <taxon>Bacteria</taxon>
        <taxon>Pseudomonadati</taxon>
        <taxon>Pseudomonadota</taxon>
        <taxon>Gammaproteobacteria</taxon>
        <taxon>Alteromonadales</taxon>
        <taxon>Shewanellaceae</taxon>
        <taxon>Shewanella</taxon>
    </lineage>
</organism>
<accession>A3CYX7</accession>
<sequence>MRPLTPRQAEILELIKRNIADTGMPPTRAEIATRLGFKSANAAEEHLKALAKKGCIEIMPGTSRGIRLTAEVEEVTETGLPLIGQVAAGEPILAQEHVEQYYQVDPSMFHPAADFLLRVKGDSMKNIGILEGDLLAVHKVQQARNGQVVVARVDDDVTVKRFEKKGNVVYLHAENEDYSPIKVDLGYQSLTIEGLAVGVIRNGDWL</sequence>
<keyword id="KW-0068">Autocatalytic cleavage</keyword>
<keyword id="KW-0227">DNA damage</keyword>
<keyword id="KW-0234">DNA repair</keyword>
<keyword id="KW-0235">DNA replication</keyword>
<keyword id="KW-0238">DNA-binding</keyword>
<keyword id="KW-0378">Hydrolase</keyword>
<keyword id="KW-1185">Reference proteome</keyword>
<keyword id="KW-0678">Repressor</keyword>
<keyword id="KW-0742">SOS response</keyword>
<keyword id="KW-0804">Transcription</keyword>
<keyword id="KW-0805">Transcription regulation</keyword>
<reference key="1">
    <citation type="submission" date="2007-02" db="EMBL/GenBank/DDBJ databases">
        <title>Complete sequence of chromosome of Shewanella baltica OS155.</title>
        <authorList>
            <consortium name="US DOE Joint Genome Institute"/>
            <person name="Copeland A."/>
            <person name="Lucas S."/>
            <person name="Lapidus A."/>
            <person name="Barry K."/>
            <person name="Detter J.C."/>
            <person name="Glavina del Rio T."/>
            <person name="Hammon N."/>
            <person name="Israni S."/>
            <person name="Dalin E."/>
            <person name="Tice H."/>
            <person name="Pitluck S."/>
            <person name="Sims D.R."/>
            <person name="Brettin T."/>
            <person name="Bruce D."/>
            <person name="Han C."/>
            <person name="Tapia R."/>
            <person name="Brainard J."/>
            <person name="Schmutz J."/>
            <person name="Larimer F."/>
            <person name="Land M."/>
            <person name="Hauser L."/>
            <person name="Kyrpides N."/>
            <person name="Mikhailova N."/>
            <person name="Brettar I."/>
            <person name="Klappenbach J."/>
            <person name="Konstantinidis K."/>
            <person name="Rodrigues J."/>
            <person name="Tiedje J."/>
            <person name="Richardson P."/>
        </authorList>
    </citation>
    <scope>NUCLEOTIDE SEQUENCE [LARGE SCALE GENOMIC DNA]</scope>
    <source>
        <strain>OS155 / ATCC BAA-1091</strain>
    </source>
</reference>
<comment type="function">
    <text evidence="1">Represses a number of genes involved in the response to DNA damage (SOS response), including recA and lexA. In the presence of single-stranded DNA, RecA interacts with LexA causing an autocatalytic cleavage which disrupts the DNA-binding part of LexA, leading to derepression of the SOS regulon and eventually DNA repair.</text>
</comment>
<comment type="catalytic activity">
    <reaction evidence="1">
        <text>Hydrolysis of Ala-|-Gly bond in repressor LexA.</text>
        <dbReference type="EC" id="3.4.21.88"/>
    </reaction>
</comment>
<comment type="subunit">
    <text evidence="1">Homodimer.</text>
</comment>
<comment type="similarity">
    <text evidence="1">Belongs to the peptidase S24 family.</text>
</comment>
<gene>
    <name evidence="1" type="primary">lexA</name>
    <name type="ordered locus">Sbal_0156</name>
</gene>
<feature type="chain" id="PRO_1000001333" description="LexA repressor">
    <location>
        <begin position="1"/>
        <end position="206"/>
    </location>
</feature>
<feature type="DNA-binding region" description="H-T-H motif" evidence="1">
    <location>
        <begin position="28"/>
        <end position="48"/>
    </location>
</feature>
<feature type="active site" description="For autocatalytic cleavage activity" evidence="1">
    <location>
        <position position="123"/>
    </location>
</feature>
<feature type="active site" description="For autocatalytic cleavage activity" evidence="1">
    <location>
        <position position="160"/>
    </location>
</feature>
<feature type="site" description="Cleavage; by autolysis" evidence="1">
    <location>
        <begin position="88"/>
        <end position="89"/>
    </location>
</feature>
<evidence type="ECO:0000255" key="1">
    <source>
        <dbReference type="HAMAP-Rule" id="MF_00015"/>
    </source>
</evidence>
<protein>
    <recommendedName>
        <fullName evidence="1">LexA repressor</fullName>
        <ecNumber evidence="1">3.4.21.88</ecNumber>
    </recommendedName>
</protein>
<name>LEXA_SHEB5</name>